<protein>
    <recommendedName>
        <fullName evidence="1">LPS-assembly protein LptD</fullName>
    </recommendedName>
</protein>
<name>LPTD_HAHCH</name>
<comment type="function">
    <text evidence="1">Together with LptE, is involved in the assembly of lipopolysaccharide (LPS) at the surface of the outer membrane.</text>
</comment>
<comment type="subunit">
    <text evidence="1">Component of the lipopolysaccharide transport and assembly complex. Interacts with LptE and LptA.</text>
</comment>
<comment type="subcellular location">
    <subcellularLocation>
        <location evidence="1">Cell outer membrane</location>
    </subcellularLocation>
</comment>
<comment type="similarity">
    <text evidence="1">Belongs to the LptD family.</text>
</comment>
<evidence type="ECO:0000255" key="1">
    <source>
        <dbReference type="HAMAP-Rule" id="MF_01411"/>
    </source>
</evidence>
<proteinExistence type="inferred from homology"/>
<keyword id="KW-0998">Cell outer membrane</keyword>
<keyword id="KW-0472">Membrane</keyword>
<keyword id="KW-1185">Reference proteome</keyword>
<keyword id="KW-0732">Signal</keyword>
<sequence>MKEGRKRLRAGYCYMLAGVVGVASTGSSRADSEPQSAAMLDWRMREFLTPQQMTTLEPQCRGTYVEPEYGFVNAPSTTSTPDNEALRARSDTLVSPSESAMRLQGNVKAQQGAWWLEADQVELDRQTNVVDLQGLKAARAPGLLLHGDTARYNLDTKDFSLSDASYLIHQRHARGDAERISSADAQLVRIEDGSYTTCDPTHNDWSIAASEIILDREQGEGAAKHMTLRIKDVPVMYFPYLRFPIDDRRKSGFLYPTIGTSNTGRGMSFGIPYYFNLAPNYDATYSPLYMHGRGLLSELEGRWLTEDTYSEVRLGYIAHDSEFSKENPDESGRRWALDFTNRYDVSENWRSTIDYNVVSDKDYLNDLNRTLEIQQETHIKRSWDVAYLGGGFSFKSHVQGYQTVDDDIVDNDRPYMLLPQLSFGWERDFDPVAFGLESEFTYFWRDDENLDPARDQQVVGARWRTQPSLTLPLSTTWGYLTPKLRLDHTDYQLEQRVTGLDESISRTVPFYSLDAGMYFDRTLSLFGDEYNQSLEPRLFYVYSPEQDQDDIPDFDTSVATFSYSQLYKEDRFVGGDRVGDNNRLTLGVTSRFNDRATGAERLRASVGQIFYYEDQQVGLGTEGLSDESESPWAGELVWRPNDRFDFKVEGLWDWQERQTEKGATTLAFHDPEYRKLLNLSHRYTHNDLEQTDVSVLFPVTDSVSVLGRWFFDLVNHRTIGTMAGVEYNDCCWRFQVIARSFLKDADDTENSELDHGVFLRFQLRGLGNIGSRFEDVMAKEMRNFNERETYRAERYQW</sequence>
<dbReference type="EMBL" id="CP000155">
    <property type="protein sequence ID" value="ABC32754.1"/>
    <property type="molecule type" value="Genomic_DNA"/>
</dbReference>
<dbReference type="RefSeq" id="WP_011399812.1">
    <property type="nucleotide sequence ID" value="NC_007645.1"/>
</dbReference>
<dbReference type="SMR" id="Q2S9C0"/>
<dbReference type="STRING" id="349521.HCH_06106"/>
<dbReference type="KEGG" id="hch:HCH_06106"/>
<dbReference type="eggNOG" id="COG1452">
    <property type="taxonomic scope" value="Bacteria"/>
</dbReference>
<dbReference type="HOGENOM" id="CLU_009039_0_0_6"/>
<dbReference type="OrthoDB" id="9760225at2"/>
<dbReference type="Proteomes" id="UP000000238">
    <property type="component" value="Chromosome"/>
</dbReference>
<dbReference type="GO" id="GO:0009279">
    <property type="term" value="C:cell outer membrane"/>
    <property type="evidence" value="ECO:0007669"/>
    <property type="project" value="UniProtKB-SubCell"/>
</dbReference>
<dbReference type="GO" id="GO:1990351">
    <property type="term" value="C:transporter complex"/>
    <property type="evidence" value="ECO:0007669"/>
    <property type="project" value="TreeGrafter"/>
</dbReference>
<dbReference type="GO" id="GO:0043165">
    <property type="term" value="P:Gram-negative-bacterium-type cell outer membrane assembly"/>
    <property type="evidence" value="ECO:0007669"/>
    <property type="project" value="UniProtKB-UniRule"/>
</dbReference>
<dbReference type="GO" id="GO:0015920">
    <property type="term" value="P:lipopolysaccharide transport"/>
    <property type="evidence" value="ECO:0007669"/>
    <property type="project" value="InterPro"/>
</dbReference>
<dbReference type="HAMAP" id="MF_01411">
    <property type="entry name" value="LPS_assembly_LptD"/>
    <property type="match status" value="1"/>
</dbReference>
<dbReference type="InterPro" id="IPR020889">
    <property type="entry name" value="LipoPS_assembly_LptD"/>
</dbReference>
<dbReference type="InterPro" id="IPR050218">
    <property type="entry name" value="LptD"/>
</dbReference>
<dbReference type="InterPro" id="IPR007543">
    <property type="entry name" value="LptD_C"/>
</dbReference>
<dbReference type="InterPro" id="IPR005653">
    <property type="entry name" value="OstA-like_N"/>
</dbReference>
<dbReference type="PANTHER" id="PTHR30189">
    <property type="entry name" value="LPS-ASSEMBLY PROTEIN"/>
    <property type="match status" value="1"/>
</dbReference>
<dbReference type="PANTHER" id="PTHR30189:SF1">
    <property type="entry name" value="LPS-ASSEMBLY PROTEIN LPTD"/>
    <property type="match status" value="1"/>
</dbReference>
<dbReference type="Pfam" id="PF04453">
    <property type="entry name" value="LptD"/>
    <property type="match status" value="1"/>
</dbReference>
<dbReference type="Pfam" id="PF03968">
    <property type="entry name" value="LptD_N"/>
    <property type="match status" value="1"/>
</dbReference>
<gene>
    <name evidence="1" type="primary">lptD</name>
    <name type="synonym">imp</name>
    <name type="synonym">ostA</name>
    <name type="ordered locus">HCH_06106</name>
</gene>
<reference key="1">
    <citation type="journal article" date="2005" name="Nucleic Acids Res.">
        <title>Genomic blueprint of Hahella chejuensis, a marine microbe producing an algicidal agent.</title>
        <authorList>
            <person name="Jeong H."/>
            <person name="Yim J.H."/>
            <person name="Lee C."/>
            <person name="Choi S.-H."/>
            <person name="Park Y.K."/>
            <person name="Yoon S.H."/>
            <person name="Hur C.-G."/>
            <person name="Kang H.-Y."/>
            <person name="Kim D."/>
            <person name="Lee H.H."/>
            <person name="Park K.H."/>
            <person name="Park S.-H."/>
            <person name="Park H.-S."/>
            <person name="Lee H.K."/>
            <person name="Oh T.K."/>
            <person name="Kim J.F."/>
        </authorList>
    </citation>
    <scope>NUCLEOTIDE SEQUENCE [LARGE SCALE GENOMIC DNA]</scope>
    <source>
        <strain>KCTC 2396</strain>
    </source>
</reference>
<accession>Q2S9C0</accession>
<organism>
    <name type="scientific">Hahella chejuensis (strain KCTC 2396)</name>
    <dbReference type="NCBI Taxonomy" id="349521"/>
    <lineage>
        <taxon>Bacteria</taxon>
        <taxon>Pseudomonadati</taxon>
        <taxon>Pseudomonadota</taxon>
        <taxon>Gammaproteobacteria</taxon>
        <taxon>Oceanospirillales</taxon>
        <taxon>Hahellaceae</taxon>
        <taxon>Hahella</taxon>
    </lineage>
</organism>
<feature type="signal peptide" evidence="1">
    <location>
        <begin position="1"/>
        <end position="30"/>
    </location>
</feature>
<feature type="chain" id="PRO_0000281611" description="LPS-assembly protein LptD">
    <location>
        <begin position="31"/>
        <end position="797"/>
    </location>
</feature>